<name>ASPG_DIRIM</name>
<sequence length="590" mass="66253">MQCEEAHVLVLYTGGTIGMKYIDGVYQPEANYLLHAIRDLSLLNDDDYVSTYYSDAEIRPYCLPPLQHSKKRVVYWMIEYDPLLDSSDMTFDDWIHIGKDIQRAYDQYVGFVILHGTDTLAYTACALSFMLENVRKPIVITGAQIPVCEVRSDGRENLIGALIIAANYDIPEVTVYFNNKLFRGNRTVKIDNRSMDAFESPNMLPIAYMDVDIKVNYDSIFRSPSMAPFVVHDQLCRNVGLLRIFPSMSIENVRASLQAPIEGVVLQTFGAGNMPSHRTDIIDELKKAVDRGCIIINCSQCVRGQVDIHYLTGKVLYDMGIIPGSDMTAEAALTKLSYVLSKDCWELVEKKAMMVKNIRGELTVAKAEPLKDLEIVSQMARFLHLSSSHEMKLLCHAIFPQLLCYAASNGDIEMLKALHENGVDLSVVDYNGRNALHVAASAGHVGAVKYLLTQGVSFHLRDQWDENALVSAVKMKNKILIETLRSAGALLSINSRRLGVELCLCASYGDTETLNSWLAAGADINQQDYNGETALHIAVKSRNKQLVHYLLDRDADPYKIDDFNLTPLRHAKKLNLQDLVIRMKKMKKVQ</sequence>
<dbReference type="EC" id="3.5.1.1"/>
<dbReference type="EMBL" id="AF116552">
    <property type="protein sequence ID" value="AAF20016.1"/>
    <property type="molecule type" value="mRNA"/>
</dbReference>
<dbReference type="SMR" id="Q9U518"/>
<dbReference type="OrthoDB" id="542841at2759"/>
<dbReference type="GO" id="GO:0004067">
    <property type="term" value="F:asparaginase activity"/>
    <property type="evidence" value="ECO:0000314"/>
    <property type="project" value="UniProtKB"/>
</dbReference>
<dbReference type="GO" id="GO:0006528">
    <property type="term" value="P:asparagine metabolic process"/>
    <property type="evidence" value="ECO:0000314"/>
    <property type="project" value="UniProtKB"/>
</dbReference>
<dbReference type="CDD" id="cd08963">
    <property type="entry name" value="L-asparaginase_I"/>
    <property type="match status" value="1"/>
</dbReference>
<dbReference type="FunFam" id="3.40.50.1170:FF:000003">
    <property type="entry name" value="60 kDa lysophospholipase"/>
    <property type="match status" value="1"/>
</dbReference>
<dbReference type="FunFam" id="3.40.50.40:FF:000001">
    <property type="entry name" value="L-asparaginase 1"/>
    <property type="match status" value="1"/>
</dbReference>
<dbReference type="Gene3D" id="3.40.50.40">
    <property type="match status" value="1"/>
</dbReference>
<dbReference type="Gene3D" id="1.25.40.20">
    <property type="entry name" value="Ankyrin repeat-containing domain"/>
    <property type="match status" value="2"/>
</dbReference>
<dbReference type="Gene3D" id="3.40.50.1170">
    <property type="entry name" value="L-asparaginase, N-terminal domain"/>
    <property type="match status" value="1"/>
</dbReference>
<dbReference type="InterPro" id="IPR002110">
    <property type="entry name" value="Ankyrin_rpt"/>
</dbReference>
<dbReference type="InterPro" id="IPR036770">
    <property type="entry name" value="Ankyrin_rpt-contain_sf"/>
</dbReference>
<dbReference type="InterPro" id="IPR006033">
    <property type="entry name" value="AsnA_fam"/>
</dbReference>
<dbReference type="InterPro" id="IPR036152">
    <property type="entry name" value="Asp/glu_Ase-like_sf"/>
</dbReference>
<dbReference type="InterPro" id="IPR006034">
    <property type="entry name" value="Asparaginase/glutaminase-like"/>
</dbReference>
<dbReference type="InterPro" id="IPR020827">
    <property type="entry name" value="Asparaginase/glutaminase_AS1"/>
</dbReference>
<dbReference type="InterPro" id="IPR027475">
    <property type="entry name" value="Asparaginase/glutaminase_AS2"/>
</dbReference>
<dbReference type="InterPro" id="IPR040919">
    <property type="entry name" value="Asparaginase_C"/>
</dbReference>
<dbReference type="InterPro" id="IPR027473">
    <property type="entry name" value="L-asparaginase_C"/>
</dbReference>
<dbReference type="InterPro" id="IPR041725">
    <property type="entry name" value="L-asparaginase_I"/>
</dbReference>
<dbReference type="InterPro" id="IPR027474">
    <property type="entry name" value="L-asparaginase_N"/>
</dbReference>
<dbReference type="InterPro" id="IPR037152">
    <property type="entry name" value="L-asparaginase_N_sf"/>
</dbReference>
<dbReference type="NCBIfam" id="TIGR00519">
    <property type="entry name" value="asnASE_I"/>
    <property type="match status" value="1"/>
</dbReference>
<dbReference type="PANTHER" id="PTHR11707:SF28">
    <property type="entry name" value="60 KDA LYSOPHOSPHOLIPASE"/>
    <property type="match status" value="1"/>
</dbReference>
<dbReference type="PANTHER" id="PTHR11707">
    <property type="entry name" value="L-ASPARAGINASE"/>
    <property type="match status" value="1"/>
</dbReference>
<dbReference type="Pfam" id="PF13637">
    <property type="entry name" value="Ank_4"/>
    <property type="match status" value="2"/>
</dbReference>
<dbReference type="Pfam" id="PF00710">
    <property type="entry name" value="Asparaginase"/>
    <property type="match status" value="1"/>
</dbReference>
<dbReference type="Pfam" id="PF17763">
    <property type="entry name" value="Asparaginase_C"/>
    <property type="match status" value="1"/>
</dbReference>
<dbReference type="PIRSF" id="PIRSF001220">
    <property type="entry name" value="L-ASNase_gatD"/>
    <property type="match status" value="1"/>
</dbReference>
<dbReference type="PIRSF" id="PIRSF500176">
    <property type="entry name" value="L_ASNase"/>
    <property type="match status" value="1"/>
</dbReference>
<dbReference type="PRINTS" id="PR00139">
    <property type="entry name" value="ASNGLNASE"/>
</dbReference>
<dbReference type="SFLD" id="SFLDS00057">
    <property type="entry name" value="Glutaminase/Asparaginase"/>
    <property type="match status" value="1"/>
</dbReference>
<dbReference type="SMART" id="SM00248">
    <property type="entry name" value="ANK"/>
    <property type="match status" value="5"/>
</dbReference>
<dbReference type="SMART" id="SM00870">
    <property type="entry name" value="Asparaginase"/>
    <property type="match status" value="1"/>
</dbReference>
<dbReference type="SUPFAM" id="SSF48403">
    <property type="entry name" value="Ankyrin repeat"/>
    <property type="match status" value="1"/>
</dbReference>
<dbReference type="SUPFAM" id="SSF53774">
    <property type="entry name" value="Glutaminase/Asparaginase"/>
    <property type="match status" value="1"/>
</dbReference>
<dbReference type="PROSITE" id="PS50297">
    <property type="entry name" value="ANK_REP_REGION"/>
    <property type="match status" value="1"/>
</dbReference>
<dbReference type="PROSITE" id="PS50088">
    <property type="entry name" value="ANK_REPEAT"/>
    <property type="match status" value="2"/>
</dbReference>
<dbReference type="PROSITE" id="PS00144">
    <property type="entry name" value="ASN_GLN_ASE_1"/>
    <property type="match status" value="1"/>
</dbReference>
<dbReference type="PROSITE" id="PS00917">
    <property type="entry name" value="ASN_GLN_ASE_2"/>
    <property type="match status" value="1"/>
</dbReference>
<dbReference type="PROSITE" id="PS51732">
    <property type="entry name" value="ASN_GLN_ASE_3"/>
    <property type="match status" value="1"/>
</dbReference>
<keyword id="KW-0040">ANK repeat</keyword>
<keyword id="KW-0378">Hydrolase</keyword>
<keyword id="KW-0677">Repeat</keyword>
<organism evidence="7">
    <name type="scientific">Dirofilaria immitis</name>
    <name type="common">Canine heartworm</name>
    <dbReference type="NCBI Taxonomy" id="6287"/>
    <lineage>
        <taxon>Eukaryota</taxon>
        <taxon>Metazoa</taxon>
        <taxon>Ecdysozoa</taxon>
        <taxon>Nematoda</taxon>
        <taxon>Chromadorea</taxon>
        <taxon>Rhabditida</taxon>
        <taxon>Spirurina</taxon>
        <taxon>Spiruromorpha</taxon>
        <taxon>Filarioidea</taxon>
        <taxon>Onchocercidae</taxon>
        <taxon>Dirofilaria</taxon>
    </lineage>
</organism>
<feature type="chain" id="PRO_0000171090" description="L-asparaginase">
    <location>
        <begin position="1"/>
        <end position="590"/>
    </location>
</feature>
<feature type="domain" description="Asparaginase/glutaminase" evidence="2">
    <location>
        <begin position="6"/>
        <end position="357"/>
    </location>
</feature>
<feature type="repeat" description="ANK 1" evidence="6">
    <location>
        <begin position="398"/>
        <end position="427"/>
    </location>
</feature>
<feature type="repeat" description="ANK 2" evidence="6">
    <location>
        <begin position="431"/>
        <end position="460"/>
    </location>
</feature>
<feature type="repeat" description="ANK 3" evidence="6">
    <location>
        <begin position="497"/>
        <end position="526"/>
    </location>
</feature>
<feature type="repeat" description="ANK 4" evidence="6">
    <location>
        <begin position="530"/>
        <end position="559"/>
    </location>
</feature>
<feature type="region of interest" description="Asparaginase">
    <location>
        <begin position="44"/>
        <end position="351"/>
    </location>
</feature>
<feature type="active site" description="O-isoaspartyl threonine intermediate" evidence="3 4">
    <location>
        <position position="16"/>
    </location>
</feature>
<feature type="binding site" evidence="1">
    <location>
        <begin position="85"/>
        <end position="87"/>
    </location>
    <ligand>
        <name>substrate</name>
    </ligand>
</feature>
<feature type="binding site" evidence="1">
    <location>
        <begin position="117"/>
        <end position="118"/>
    </location>
    <ligand>
        <name>substrate</name>
    </ligand>
</feature>
<reference evidence="6 7" key="1">
    <citation type="journal article" date="1999" name="Int. J. Parasitol.">
        <title>Identification of an asparagine amidohydrolase from the filarial parasite Dirofilaria immitis.</title>
        <authorList>
            <person name="Tsuji N."/>
            <person name="Morales T.H."/>
            <person name="Ozols V.V."/>
            <person name="Carmody A.B."/>
            <person name="Chandrashekar R."/>
        </authorList>
    </citation>
    <scope>NUCLEOTIDE SEQUENCE [MRNA]</scope>
    <scope>DEVELOPMENTAL STAGE</scope>
    <scope>CATALYTIC ACTIVITY</scope>
    <scope>TISSUE SPECIFICITY</scope>
    <source>
        <tissue>Larva</tissue>
    </source>
</reference>
<proteinExistence type="evidence at protein level"/>
<comment type="catalytic activity">
    <reaction evidence="5">
        <text>L-asparagine + H2O = L-aspartate + NH4(+)</text>
        <dbReference type="Rhea" id="RHEA:21016"/>
        <dbReference type="ChEBI" id="CHEBI:15377"/>
        <dbReference type="ChEBI" id="CHEBI:28938"/>
        <dbReference type="ChEBI" id="CHEBI:29991"/>
        <dbReference type="ChEBI" id="CHEBI:58048"/>
        <dbReference type="EC" id="3.5.1.1"/>
    </reaction>
</comment>
<comment type="tissue specificity">
    <text evidence="5">May be present in the larval cuticle.</text>
</comment>
<comment type="developmental stage">
    <text evidence="5">Adult and larval stages.</text>
</comment>
<comment type="similarity">
    <text evidence="6">In the N-terminal section; belongs to the asparaginase 1 family.</text>
</comment>
<protein>
    <recommendedName>
        <fullName>L-asparaginase</fullName>
        <ecNumber>3.5.1.1</ecNumber>
    </recommendedName>
    <alternativeName>
        <fullName>DiAsp</fullName>
    </alternativeName>
    <alternativeName>
        <fullName>L-asparagine amidohydrolase</fullName>
    </alternativeName>
</protein>
<accession>Q9U518</accession>
<evidence type="ECO:0000250" key="1"/>
<evidence type="ECO:0000255" key="2">
    <source>
        <dbReference type="PROSITE-ProRule" id="PRU01068"/>
    </source>
</evidence>
<evidence type="ECO:0000255" key="3">
    <source>
        <dbReference type="PROSITE-ProRule" id="PRU10099"/>
    </source>
</evidence>
<evidence type="ECO:0000255" key="4">
    <source>
        <dbReference type="PROSITE-ProRule" id="PRU10100"/>
    </source>
</evidence>
<evidence type="ECO:0000269" key="5">
    <source>
    </source>
</evidence>
<evidence type="ECO:0000305" key="6"/>
<evidence type="ECO:0000312" key="7">
    <source>
        <dbReference type="EMBL" id="AAF20016.1"/>
    </source>
</evidence>